<name>RNH_CHRVO</name>
<sequence>MTTEDRVEIYTDGACKGNPGPGGWGALMRYKGKEKELFGGERGTTNNRMEIMAVIRALAALNRPCKVVVYTDSQYVQKGISEWIHGWKARGWKTAAKEPVKNADLWQQLDAERNRHLDVEWRWVKGHAGHEFNERADQLANKGVESV</sequence>
<keyword id="KW-0963">Cytoplasm</keyword>
<keyword id="KW-0255">Endonuclease</keyword>
<keyword id="KW-0378">Hydrolase</keyword>
<keyword id="KW-0460">Magnesium</keyword>
<keyword id="KW-0479">Metal-binding</keyword>
<keyword id="KW-0540">Nuclease</keyword>
<keyword id="KW-1185">Reference proteome</keyword>
<evidence type="ECO:0000255" key="1">
    <source>
        <dbReference type="HAMAP-Rule" id="MF_00042"/>
    </source>
</evidence>
<evidence type="ECO:0000255" key="2">
    <source>
        <dbReference type="PROSITE-ProRule" id="PRU00408"/>
    </source>
</evidence>
<organism>
    <name type="scientific">Chromobacterium violaceum (strain ATCC 12472 / DSM 30191 / JCM 1249 / CCUG 213 / NBRC 12614 / NCIMB 9131 / NCTC 9757 / MK)</name>
    <dbReference type="NCBI Taxonomy" id="243365"/>
    <lineage>
        <taxon>Bacteria</taxon>
        <taxon>Pseudomonadati</taxon>
        <taxon>Pseudomonadota</taxon>
        <taxon>Betaproteobacteria</taxon>
        <taxon>Neisseriales</taxon>
        <taxon>Chromobacteriaceae</taxon>
        <taxon>Chromobacterium</taxon>
    </lineage>
</organism>
<feature type="chain" id="PRO_0000332577" description="Ribonuclease H">
    <location>
        <begin position="1"/>
        <end position="147"/>
    </location>
</feature>
<feature type="domain" description="RNase H type-1" evidence="2">
    <location>
        <begin position="3"/>
        <end position="145"/>
    </location>
</feature>
<feature type="binding site" evidence="1">
    <location>
        <position position="12"/>
    </location>
    <ligand>
        <name>Mg(2+)</name>
        <dbReference type="ChEBI" id="CHEBI:18420"/>
        <label>1</label>
    </ligand>
</feature>
<feature type="binding site" evidence="1">
    <location>
        <position position="12"/>
    </location>
    <ligand>
        <name>Mg(2+)</name>
        <dbReference type="ChEBI" id="CHEBI:18420"/>
        <label>2</label>
    </ligand>
</feature>
<feature type="binding site" evidence="1">
    <location>
        <position position="50"/>
    </location>
    <ligand>
        <name>Mg(2+)</name>
        <dbReference type="ChEBI" id="CHEBI:18420"/>
        <label>1</label>
    </ligand>
</feature>
<feature type="binding site" evidence="1">
    <location>
        <position position="72"/>
    </location>
    <ligand>
        <name>Mg(2+)</name>
        <dbReference type="ChEBI" id="CHEBI:18420"/>
        <label>1</label>
    </ligand>
</feature>
<feature type="binding site" evidence="1">
    <location>
        <position position="137"/>
    </location>
    <ligand>
        <name>Mg(2+)</name>
        <dbReference type="ChEBI" id="CHEBI:18420"/>
        <label>2</label>
    </ligand>
</feature>
<reference key="1">
    <citation type="journal article" date="2003" name="Proc. Natl. Acad. Sci. U.S.A.">
        <title>The complete genome sequence of Chromobacterium violaceum reveals remarkable and exploitable bacterial adaptability.</title>
        <authorList>
            <person name="Vasconcelos A.T.R."/>
            <person name="de Almeida D.F."/>
            <person name="Hungria M."/>
            <person name="Guimaraes C.T."/>
            <person name="Antonio R.V."/>
            <person name="Almeida F.C."/>
            <person name="de Almeida L.G.P."/>
            <person name="de Almeida R."/>
            <person name="Alves-Gomes J.A."/>
            <person name="Andrade E.M."/>
            <person name="Araripe J."/>
            <person name="de Araujo M.F.F."/>
            <person name="Astolfi-Filho S."/>
            <person name="Azevedo V."/>
            <person name="Baptista A.J."/>
            <person name="Bataus L.A.M."/>
            <person name="Batista J.S."/>
            <person name="Belo A."/>
            <person name="van den Berg C."/>
            <person name="Bogo M."/>
            <person name="Bonatto S."/>
            <person name="Bordignon J."/>
            <person name="Brigido M.M."/>
            <person name="Brito C.A."/>
            <person name="Brocchi M."/>
            <person name="Burity H.A."/>
            <person name="Camargo A.A."/>
            <person name="Cardoso D.D.P."/>
            <person name="Carneiro N.P."/>
            <person name="Carraro D.M."/>
            <person name="Carvalho C.M.B."/>
            <person name="Cascardo J.C.M."/>
            <person name="Cavada B.S."/>
            <person name="Chueire L.M.O."/>
            <person name="Creczynski-Pasa T.B."/>
            <person name="Cunha-Junior N.C."/>
            <person name="Fagundes N."/>
            <person name="Falcao C.L."/>
            <person name="Fantinatti F."/>
            <person name="Farias I.P."/>
            <person name="Felipe M.S.S."/>
            <person name="Ferrari L.P."/>
            <person name="Ferro J.A."/>
            <person name="Ferro M.I.T."/>
            <person name="Franco G.R."/>
            <person name="Freitas N.S.A."/>
            <person name="Furlan L.R."/>
            <person name="Gazzinelli R.T."/>
            <person name="Gomes E.A."/>
            <person name="Goncalves P.R."/>
            <person name="Grangeiro T.B."/>
            <person name="Grattapaglia D."/>
            <person name="Grisard E.C."/>
            <person name="Hanna E.S."/>
            <person name="Jardim S.N."/>
            <person name="Laurino J."/>
            <person name="Leoi L.C.T."/>
            <person name="Lima L.F.A."/>
            <person name="Loureiro M.F."/>
            <person name="Lyra M.C.C.P."/>
            <person name="Madeira H.M.F."/>
            <person name="Manfio G.P."/>
            <person name="Maranhao A.Q."/>
            <person name="Martins W.S."/>
            <person name="di Mauro S.M.Z."/>
            <person name="de Medeiros S.R.B."/>
            <person name="Meissner R.V."/>
            <person name="Moreira M.A.M."/>
            <person name="Nascimento F.F."/>
            <person name="Nicolas M.F."/>
            <person name="Oliveira J.G."/>
            <person name="Oliveira S.C."/>
            <person name="Paixao R.F.C."/>
            <person name="Parente J.A."/>
            <person name="Pedrosa F.O."/>
            <person name="Pena S.D.J."/>
            <person name="Pereira J.O."/>
            <person name="Pereira M."/>
            <person name="Pinto L.S.R.C."/>
            <person name="Pinto L.S."/>
            <person name="Porto J.I.R."/>
            <person name="Potrich D.P."/>
            <person name="Ramalho-Neto C.E."/>
            <person name="Reis A.M.M."/>
            <person name="Rigo L.U."/>
            <person name="Rondinelli E."/>
            <person name="Santos E.B.P."/>
            <person name="Santos F.R."/>
            <person name="Schneider M.P.C."/>
            <person name="Seuanez H.N."/>
            <person name="Silva A.M.R."/>
            <person name="da Silva A.L.C."/>
            <person name="Silva D.W."/>
            <person name="Silva R."/>
            <person name="Simoes I.C."/>
            <person name="Simon D."/>
            <person name="Soares C.M.A."/>
            <person name="Soares R.B.A."/>
            <person name="Souza E.M."/>
            <person name="Souza K.R.L."/>
            <person name="Souza R.C."/>
            <person name="Steffens M.B.R."/>
            <person name="Steindel M."/>
            <person name="Teixeira S.R."/>
            <person name="Urmenyi T."/>
            <person name="Vettore A."/>
            <person name="Wassem R."/>
            <person name="Zaha A."/>
            <person name="Simpson A.J.G."/>
        </authorList>
    </citation>
    <scope>NUCLEOTIDE SEQUENCE [LARGE SCALE GENOMIC DNA]</scope>
    <source>
        <strain>ATCC 12472 / DSM 30191 / JCM 1249 / CCUG 213 / NBRC 12614 / NCIMB 9131 / NCTC 9757 / MK</strain>
    </source>
</reference>
<comment type="function">
    <text evidence="1">Endonuclease that specifically degrades the RNA of RNA-DNA hybrids.</text>
</comment>
<comment type="catalytic activity">
    <reaction evidence="1">
        <text>Endonucleolytic cleavage to 5'-phosphomonoester.</text>
        <dbReference type="EC" id="3.1.26.4"/>
    </reaction>
</comment>
<comment type="cofactor">
    <cofactor evidence="1">
        <name>Mg(2+)</name>
        <dbReference type="ChEBI" id="CHEBI:18420"/>
    </cofactor>
    <text evidence="1">Binds 1 Mg(2+) ion per subunit. May bind a second metal ion at a regulatory site, or after substrate binding.</text>
</comment>
<comment type="subunit">
    <text evidence="1">Monomer.</text>
</comment>
<comment type="subcellular location">
    <subcellularLocation>
        <location evidence="1">Cytoplasm</location>
    </subcellularLocation>
</comment>
<comment type="similarity">
    <text evidence="1">Belongs to the RNase H family.</text>
</comment>
<gene>
    <name evidence="1" type="primary">rnhA</name>
    <name type="ordered locus">CV_1256</name>
</gene>
<accession>Q7NYL8</accession>
<protein>
    <recommendedName>
        <fullName evidence="1">Ribonuclease H</fullName>
        <shortName evidence="1">RNase H</shortName>
        <ecNumber evidence="1">3.1.26.4</ecNumber>
    </recommendedName>
</protein>
<proteinExistence type="inferred from homology"/>
<dbReference type="EC" id="3.1.26.4" evidence="1"/>
<dbReference type="EMBL" id="AE016825">
    <property type="protein sequence ID" value="AAQ58931.1"/>
    <property type="molecule type" value="Genomic_DNA"/>
</dbReference>
<dbReference type="RefSeq" id="WP_011134810.1">
    <property type="nucleotide sequence ID" value="NC_005085.1"/>
</dbReference>
<dbReference type="SMR" id="Q7NYL8"/>
<dbReference type="STRING" id="243365.CV_1256"/>
<dbReference type="GeneID" id="66366916"/>
<dbReference type="KEGG" id="cvi:CV_1256"/>
<dbReference type="eggNOG" id="COG0328">
    <property type="taxonomic scope" value="Bacteria"/>
</dbReference>
<dbReference type="HOGENOM" id="CLU_030894_6_0_4"/>
<dbReference type="OrthoDB" id="7845843at2"/>
<dbReference type="Proteomes" id="UP000001424">
    <property type="component" value="Chromosome"/>
</dbReference>
<dbReference type="GO" id="GO:0005737">
    <property type="term" value="C:cytoplasm"/>
    <property type="evidence" value="ECO:0007669"/>
    <property type="project" value="UniProtKB-SubCell"/>
</dbReference>
<dbReference type="GO" id="GO:0000287">
    <property type="term" value="F:magnesium ion binding"/>
    <property type="evidence" value="ECO:0007669"/>
    <property type="project" value="UniProtKB-UniRule"/>
</dbReference>
<dbReference type="GO" id="GO:0003676">
    <property type="term" value="F:nucleic acid binding"/>
    <property type="evidence" value="ECO:0007669"/>
    <property type="project" value="InterPro"/>
</dbReference>
<dbReference type="GO" id="GO:0004523">
    <property type="term" value="F:RNA-DNA hybrid ribonuclease activity"/>
    <property type="evidence" value="ECO:0007669"/>
    <property type="project" value="UniProtKB-UniRule"/>
</dbReference>
<dbReference type="GO" id="GO:0043137">
    <property type="term" value="P:DNA replication, removal of RNA primer"/>
    <property type="evidence" value="ECO:0007669"/>
    <property type="project" value="TreeGrafter"/>
</dbReference>
<dbReference type="CDD" id="cd09278">
    <property type="entry name" value="RNase_HI_prokaryote_like"/>
    <property type="match status" value="1"/>
</dbReference>
<dbReference type="FunFam" id="3.30.420.10:FF:000089">
    <property type="entry name" value="Ribonuclease H"/>
    <property type="match status" value="1"/>
</dbReference>
<dbReference type="Gene3D" id="3.30.420.10">
    <property type="entry name" value="Ribonuclease H-like superfamily/Ribonuclease H"/>
    <property type="match status" value="1"/>
</dbReference>
<dbReference type="HAMAP" id="MF_00042">
    <property type="entry name" value="RNase_H"/>
    <property type="match status" value="1"/>
</dbReference>
<dbReference type="InterPro" id="IPR050092">
    <property type="entry name" value="RNase_H"/>
</dbReference>
<dbReference type="InterPro" id="IPR012337">
    <property type="entry name" value="RNaseH-like_sf"/>
</dbReference>
<dbReference type="InterPro" id="IPR002156">
    <property type="entry name" value="RNaseH_domain"/>
</dbReference>
<dbReference type="InterPro" id="IPR036397">
    <property type="entry name" value="RNaseH_sf"/>
</dbReference>
<dbReference type="InterPro" id="IPR022892">
    <property type="entry name" value="RNaseHI"/>
</dbReference>
<dbReference type="NCBIfam" id="NF001236">
    <property type="entry name" value="PRK00203.1"/>
    <property type="match status" value="1"/>
</dbReference>
<dbReference type="PANTHER" id="PTHR10642">
    <property type="entry name" value="RIBONUCLEASE H1"/>
    <property type="match status" value="1"/>
</dbReference>
<dbReference type="PANTHER" id="PTHR10642:SF26">
    <property type="entry name" value="RIBONUCLEASE H1"/>
    <property type="match status" value="1"/>
</dbReference>
<dbReference type="Pfam" id="PF00075">
    <property type="entry name" value="RNase_H"/>
    <property type="match status" value="1"/>
</dbReference>
<dbReference type="SUPFAM" id="SSF53098">
    <property type="entry name" value="Ribonuclease H-like"/>
    <property type="match status" value="1"/>
</dbReference>
<dbReference type="PROSITE" id="PS50879">
    <property type="entry name" value="RNASE_H_1"/>
    <property type="match status" value="1"/>
</dbReference>